<proteinExistence type="inferred from homology"/>
<reference key="1">
    <citation type="journal article" date="2007" name="Proc. Natl. Acad. Sci. U.S.A.">
        <title>Genome sequencing and comparative analysis of Saccharomyces cerevisiae strain YJM789.</title>
        <authorList>
            <person name="Wei W."/>
            <person name="McCusker J.H."/>
            <person name="Hyman R.W."/>
            <person name="Jones T."/>
            <person name="Ning Y."/>
            <person name="Cao Z."/>
            <person name="Gu Z."/>
            <person name="Bruno D."/>
            <person name="Miranda M."/>
            <person name="Nguyen M."/>
            <person name="Wilhelmy J."/>
            <person name="Komp C."/>
            <person name="Tamse R."/>
            <person name="Wang X."/>
            <person name="Jia P."/>
            <person name="Luedi P."/>
            <person name="Oefner P.J."/>
            <person name="David L."/>
            <person name="Dietrich F.S."/>
            <person name="Li Y."/>
            <person name="Davis R.W."/>
            <person name="Steinmetz L.M."/>
        </authorList>
    </citation>
    <scope>NUCLEOTIDE SEQUENCE [LARGE SCALE GENOMIC DNA]</scope>
    <source>
        <strain>YJM789</strain>
    </source>
</reference>
<organism>
    <name type="scientific">Saccharomyces cerevisiae (strain YJM789)</name>
    <name type="common">Baker's yeast</name>
    <dbReference type="NCBI Taxonomy" id="307796"/>
    <lineage>
        <taxon>Eukaryota</taxon>
        <taxon>Fungi</taxon>
        <taxon>Dikarya</taxon>
        <taxon>Ascomycota</taxon>
        <taxon>Saccharomycotina</taxon>
        <taxon>Saccharomycetes</taxon>
        <taxon>Saccharomycetales</taxon>
        <taxon>Saccharomycetaceae</taxon>
        <taxon>Saccharomyces</taxon>
    </lineage>
</organism>
<dbReference type="EMBL" id="AAFW02000124">
    <property type="protein sequence ID" value="EDN61485.1"/>
    <property type="molecule type" value="Genomic_DNA"/>
</dbReference>
<dbReference type="BMRB" id="A6ZVR0"/>
<dbReference type="SMR" id="A6ZVR0"/>
<dbReference type="HOGENOM" id="CLU_148208_0_0_1"/>
<dbReference type="UniPathway" id="UPA00988"/>
<dbReference type="Proteomes" id="UP000007060">
    <property type="component" value="Unassembled WGS sequence"/>
</dbReference>
<dbReference type="GO" id="GO:0005829">
    <property type="term" value="C:cytosol"/>
    <property type="evidence" value="ECO:0007669"/>
    <property type="project" value="UniProtKB-UniRule"/>
</dbReference>
<dbReference type="GO" id="GO:0005634">
    <property type="term" value="C:nucleus"/>
    <property type="evidence" value="ECO:0007669"/>
    <property type="project" value="UniProtKB-SubCell"/>
</dbReference>
<dbReference type="GO" id="GO:0032447">
    <property type="term" value="P:protein urmylation"/>
    <property type="evidence" value="ECO:0007669"/>
    <property type="project" value="UniProtKB-UniRule"/>
</dbReference>
<dbReference type="GO" id="GO:0034227">
    <property type="term" value="P:tRNA thio-modification"/>
    <property type="evidence" value="ECO:0007669"/>
    <property type="project" value="UniProtKB-UniRule"/>
</dbReference>
<dbReference type="GO" id="GO:0002098">
    <property type="term" value="P:tRNA wobble uridine modification"/>
    <property type="evidence" value="ECO:0007669"/>
    <property type="project" value="UniProtKB-UniRule"/>
</dbReference>
<dbReference type="CDD" id="cd01764">
    <property type="entry name" value="Ubl_Urm1"/>
    <property type="match status" value="1"/>
</dbReference>
<dbReference type="FunFam" id="3.10.20.30:FF:000052">
    <property type="entry name" value="Ubiquitin-related modifier 1"/>
    <property type="match status" value="1"/>
</dbReference>
<dbReference type="Gene3D" id="3.10.20.30">
    <property type="match status" value="1"/>
</dbReference>
<dbReference type="HAMAP" id="MF_03048">
    <property type="entry name" value="Urm1"/>
    <property type="match status" value="1"/>
</dbReference>
<dbReference type="InterPro" id="IPR012675">
    <property type="entry name" value="Beta-grasp_dom_sf"/>
</dbReference>
<dbReference type="InterPro" id="IPR016155">
    <property type="entry name" value="Mopterin_synth/thiamin_S_b"/>
</dbReference>
<dbReference type="InterPro" id="IPR015221">
    <property type="entry name" value="Urm1"/>
</dbReference>
<dbReference type="PANTHER" id="PTHR14986">
    <property type="entry name" value="RURM1 PROTEIN"/>
    <property type="match status" value="1"/>
</dbReference>
<dbReference type="Pfam" id="PF09138">
    <property type="entry name" value="Urm1"/>
    <property type="match status" value="1"/>
</dbReference>
<dbReference type="PIRSF" id="PIRSF037379">
    <property type="entry name" value="Ubiquitin-related_modifier_1"/>
    <property type="match status" value="1"/>
</dbReference>
<dbReference type="SUPFAM" id="SSF54285">
    <property type="entry name" value="MoaD/ThiS"/>
    <property type="match status" value="1"/>
</dbReference>
<accession>A6ZVR0</accession>
<comment type="function">
    <text evidence="1">Acts as a sulfur carrier required for 2-thiolation of mcm(5)S(2)U at tRNA wobble positions of cytosolic tRNA(Lys), tRNA(Glu) and tRNA(Gln). Serves as sulfur donor in tRNA 2-thiolation reaction by being thiocarboxylated (-COSH) at its C-terminus by the MOCS3 homolog UBA4. The sulfur is then transferred to tRNA to form 2-thiolation of mcm(5)S(2)U. Prior mcm(5) tRNA modification by the elongator complex is required for 2-thiolation. Also acts as a ubiquitin-like protein (UBL) that is covalently conjugated via an isopeptide bond to lysine residues of target proteins such as AHP1. The thiocarboxylated form serves as substrate for conjugation and oxidative stress specifically induces the formation of UBL-protein conjugates.</text>
</comment>
<comment type="pathway">
    <text evidence="1">tRNA modification; 5-methoxycarbonylmethyl-2-thiouridine-tRNA biosynthesis.</text>
</comment>
<comment type="subunit">
    <text evidence="1">Homodimer; homodimerization may provide an autoprotection to the highly active C-terminal residue before attacking its substrates. Interacts with NCS2 and NCS6. Forms a conjugate with the target protein AHP1.</text>
</comment>
<comment type="subcellular location">
    <subcellularLocation>
        <location evidence="1">Cytoplasm</location>
    </subcellularLocation>
    <subcellularLocation>
        <location evidence="1">Nucleus</location>
    </subcellularLocation>
</comment>
<comment type="PTM">
    <text evidence="1">C-terminal thiocarboxylation occurs in 2 steps, it is first acyl-adenylated (-COAMP) via the hesA/moeB/thiF part of UBA4, then thiocarboxylated (-COSH) via the rhodanese domain of UBA4.</text>
</comment>
<comment type="similarity">
    <text evidence="1">Belongs to the URM1 family.</text>
</comment>
<gene>
    <name evidence="1" type="primary">URM1</name>
    <name type="ORF">SCY_2776</name>
</gene>
<evidence type="ECO:0000255" key="1">
    <source>
        <dbReference type="HAMAP-Rule" id="MF_03048"/>
    </source>
</evidence>
<keyword id="KW-0963">Cytoplasm</keyword>
<keyword id="KW-1017">Isopeptide bond</keyword>
<keyword id="KW-0539">Nucleus</keyword>
<keyword id="KW-0819">tRNA processing</keyword>
<keyword id="KW-0833">Ubl conjugation pathway</keyword>
<protein>
    <recommendedName>
        <fullName evidence="1">Ubiquitin-related modifier 1</fullName>
    </recommendedName>
</protein>
<feature type="chain" id="PRO_0000330336" description="Ubiquitin-related modifier 1">
    <location>
        <begin position="1"/>
        <end position="99"/>
    </location>
</feature>
<feature type="modified residue" description="1-thioglycine" evidence="1">
    <location>
        <position position="99"/>
    </location>
</feature>
<feature type="cross-link" description="Glycyl lysine isopeptide (Gly-Lys) (interchain with K-? in acceptor proteins)" evidence="1">
    <location>
        <position position="99"/>
    </location>
</feature>
<sequence length="99" mass="11028">MVNVKVEFLGGLDAIFGKQRVHKIKMDKEDPVTVGDLIDHIVSTMINNPNDVSIFIEDDSIRPGIITLINDTDWELEGEKDYILEDGDIISFTSTLHGG</sequence>
<name>URM1_YEAS7</name>